<comment type="function">
    <text evidence="2">Chaperone necessary for the assembly of mitochondrial respiratory chain complex III.</text>
</comment>
<comment type="catalytic activity">
    <reaction evidence="1">
        <text>ATP + H2O = ADP + phosphate + H(+)</text>
        <dbReference type="Rhea" id="RHEA:13065"/>
        <dbReference type="ChEBI" id="CHEBI:15377"/>
        <dbReference type="ChEBI" id="CHEBI:15378"/>
        <dbReference type="ChEBI" id="CHEBI:30616"/>
        <dbReference type="ChEBI" id="CHEBI:43474"/>
        <dbReference type="ChEBI" id="CHEBI:456216"/>
    </reaction>
    <physiologicalReaction direction="left-to-right" evidence="1">
        <dbReference type="Rhea" id="RHEA:13066"/>
    </physiologicalReaction>
</comment>
<comment type="subcellular location">
    <subcellularLocation>
        <location evidence="2">Mitochondrion inner membrane</location>
        <topology evidence="3">Single-pass membrane protein</topology>
    </subcellularLocation>
</comment>
<comment type="similarity">
    <text evidence="4">Belongs to the AAA ATPase family. BCS1 subfamily.</text>
</comment>
<protein>
    <recommendedName>
        <fullName>Probable mitochondrial chaperone BCS1-A</fullName>
        <ecNumber evidence="1">3.6.1.-</ecNumber>
    </recommendedName>
    <alternativeName>
        <fullName>BCS1-like protein 1</fullName>
    </alternativeName>
</protein>
<keyword id="KW-0067">ATP-binding</keyword>
<keyword id="KW-0143">Chaperone</keyword>
<keyword id="KW-0378">Hydrolase</keyword>
<keyword id="KW-0472">Membrane</keyword>
<keyword id="KW-0496">Mitochondrion</keyword>
<keyword id="KW-0999">Mitochondrion inner membrane</keyword>
<keyword id="KW-0547">Nucleotide-binding</keyword>
<keyword id="KW-1185">Reference proteome</keyword>
<keyword id="KW-0812">Transmembrane</keyword>
<keyword id="KW-1133">Transmembrane helix</keyword>
<reference key="1">
    <citation type="journal article" date="2005" name="Nature">
        <title>The genome of the social amoeba Dictyostelium discoideum.</title>
        <authorList>
            <person name="Eichinger L."/>
            <person name="Pachebat J.A."/>
            <person name="Gloeckner G."/>
            <person name="Rajandream M.A."/>
            <person name="Sucgang R."/>
            <person name="Berriman M."/>
            <person name="Song J."/>
            <person name="Olsen R."/>
            <person name="Szafranski K."/>
            <person name="Xu Q."/>
            <person name="Tunggal B."/>
            <person name="Kummerfeld S."/>
            <person name="Madera M."/>
            <person name="Konfortov B.A."/>
            <person name="Rivero F."/>
            <person name="Bankier A.T."/>
            <person name="Lehmann R."/>
            <person name="Hamlin N."/>
            <person name="Davies R."/>
            <person name="Gaudet P."/>
            <person name="Fey P."/>
            <person name="Pilcher K."/>
            <person name="Chen G."/>
            <person name="Saunders D."/>
            <person name="Sodergren E.J."/>
            <person name="Davis P."/>
            <person name="Kerhornou A."/>
            <person name="Nie X."/>
            <person name="Hall N."/>
            <person name="Anjard C."/>
            <person name="Hemphill L."/>
            <person name="Bason N."/>
            <person name="Farbrother P."/>
            <person name="Desany B."/>
            <person name="Just E."/>
            <person name="Morio T."/>
            <person name="Rost R."/>
            <person name="Churcher C.M."/>
            <person name="Cooper J."/>
            <person name="Haydock S."/>
            <person name="van Driessche N."/>
            <person name="Cronin A."/>
            <person name="Goodhead I."/>
            <person name="Muzny D.M."/>
            <person name="Mourier T."/>
            <person name="Pain A."/>
            <person name="Lu M."/>
            <person name="Harper D."/>
            <person name="Lindsay R."/>
            <person name="Hauser H."/>
            <person name="James K.D."/>
            <person name="Quiles M."/>
            <person name="Madan Babu M."/>
            <person name="Saito T."/>
            <person name="Buchrieser C."/>
            <person name="Wardroper A."/>
            <person name="Felder M."/>
            <person name="Thangavelu M."/>
            <person name="Johnson D."/>
            <person name="Knights A."/>
            <person name="Loulseged H."/>
            <person name="Mungall K.L."/>
            <person name="Oliver K."/>
            <person name="Price C."/>
            <person name="Quail M.A."/>
            <person name="Urushihara H."/>
            <person name="Hernandez J."/>
            <person name="Rabbinowitsch E."/>
            <person name="Steffen D."/>
            <person name="Sanders M."/>
            <person name="Ma J."/>
            <person name="Kohara Y."/>
            <person name="Sharp S."/>
            <person name="Simmonds M.N."/>
            <person name="Spiegler S."/>
            <person name="Tivey A."/>
            <person name="Sugano S."/>
            <person name="White B."/>
            <person name="Walker D."/>
            <person name="Woodward J.R."/>
            <person name="Winckler T."/>
            <person name="Tanaka Y."/>
            <person name="Shaulsky G."/>
            <person name="Schleicher M."/>
            <person name="Weinstock G.M."/>
            <person name="Rosenthal A."/>
            <person name="Cox E.C."/>
            <person name="Chisholm R.L."/>
            <person name="Gibbs R.A."/>
            <person name="Loomis W.F."/>
            <person name="Platzer M."/>
            <person name="Kay R.R."/>
            <person name="Williams J.G."/>
            <person name="Dear P.H."/>
            <person name="Noegel A.A."/>
            <person name="Barrell B.G."/>
            <person name="Kuspa A."/>
        </authorList>
    </citation>
    <scope>NUCLEOTIDE SEQUENCE [LARGE SCALE GENOMIC DNA]</scope>
    <source>
        <strain>AX4</strain>
    </source>
</reference>
<name>BCS1A_DICDI</name>
<evidence type="ECO:0000250" key="1">
    <source>
        <dbReference type="UniProtKB" id="P32839"/>
    </source>
</evidence>
<evidence type="ECO:0000250" key="2">
    <source>
        <dbReference type="UniProtKB" id="Q9Y276"/>
    </source>
</evidence>
<evidence type="ECO:0000255" key="3"/>
<evidence type="ECO:0000305" key="4"/>
<proteinExistence type="inferred from homology"/>
<gene>
    <name type="primary">bcs1la</name>
    <name type="ORF">DDB_G0289135</name>
</gene>
<organism>
    <name type="scientific">Dictyostelium discoideum</name>
    <name type="common">Social amoeba</name>
    <dbReference type="NCBI Taxonomy" id="44689"/>
    <lineage>
        <taxon>Eukaryota</taxon>
        <taxon>Amoebozoa</taxon>
        <taxon>Evosea</taxon>
        <taxon>Eumycetozoa</taxon>
        <taxon>Dictyostelia</taxon>
        <taxon>Dictyosteliales</taxon>
        <taxon>Dictyosteliaceae</taxon>
        <taxon>Dictyostelium</taxon>
    </lineage>
</organism>
<accession>Q54HY8</accession>
<dbReference type="EC" id="3.6.1.-" evidence="1"/>
<dbReference type="EMBL" id="AAFI02000130">
    <property type="protein sequence ID" value="EAL62875.1"/>
    <property type="molecule type" value="Genomic_DNA"/>
</dbReference>
<dbReference type="RefSeq" id="XP_636375.1">
    <property type="nucleotide sequence ID" value="XM_631283.1"/>
</dbReference>
<dbReference type="SMR" id="Q54HY8"/>
<dbReference type="FunCoup" id="Q54HY8">
    <property type="interactions" value="16"/>
</dbReference>
<dbReference type="STRING" id="44689.Q54HY8"/>
<dbReference type="PaxDb" id="44689-DDB0266725"/>
<dbReference type="EnsemblProtists" id="EAL62875">
    <property type="protein sequence ID" value="EAL62875"/>
    <property type="gene ID" value="DDB_G0289135"/>
</dbReference>
<dbReference type="GeneID" id="8626976"/>
<dbReference type="KEGG" id="ddi:DDB_G0289135"/>
<dbReference type="dictyBase" id="DDB_G0289135">
    <property type="gene designation" value="bcs1lA"/>
</dbReference>
<dbReference type="VEuPathDB" id="AmoebaDB:DDB_G0289135"/>
<dbReference type="eggNOG" id="KOG0743">
    <property type="taxonomic scope" value="Eukaryota"/>
</dbReference>
<dbReference type="HOGENOM" id="CLU_010189_6_2_1"/>
<dbReference type="InParanoid" id="Q54HY8"/>
<dbReference type="OMA" id="LFMTTNK"/>
<dbReference type="PhylomeDB" id="Q54HY8"/>
<dbReference type="PRO" id="PR:Q54HY8"/>
<dbReference type="Proteomes" id="UP000002195">
    <property type="component" value="Chromosome 5"/>
</dbReference>
<dbReference type="GO" id="GO:0005743">
    <property type="term" value="C:mitochondrial inner membrane"/>
    <property type="evidence" value="ECO:0000318"/>
    <property type="project" value="GO_Central"/>
</dbReference>
<dbReference type="GO" id="GO:0005739">
    <property type="term" value="C:mitochondrion"/>
    <property type="evidence" value="ECO:0000250"/>
    <property type="project" value="dictyBase"/>
</dbReference>
<dbReference type="GO" id="GO:0005524">
    <property type="term" value="F:ATP binding"/>
    <property type="evidence" value="ECO:0007669"/>
    <property type="project" value="UniProtKB-KW"/>
</dbReference>
<dbReference type="GO" id="GO:0016887">
    <property type="term" value="F:ATP hydrolysis activity"/>
    <property type="evidence" value="ECO:0007669"/>
    <property type="project" value="InterPro"/>
</dbReference>
<dbReference type="GO" id="GO:0008320">
    <property type="term" value="F:protein transmembrane transporter activity"/>
    <property type="evidence" value="ECO:0000250"/>
    <property type="project" value="dictyBase"/>
</dbReference>
<dbReference type="GO" id="GO:0051131">
    <property type="term" value="P:chaperone-mediated protein complex assembly"/>
    <property type="evidence" value="ECO:0000250"/>
    <property type="project" value="dictyBase"/>
</dbReference>
<dbReference type="GO" id="GO:0034551">
    <property type="term" value="P:mitochondrial respiratory chain complex III assembly"/>
    <property type="evidence" value="ECO:0000318"/>
    <property type="project" value="GO_Central"/>
</dbReference>
<dbReference type="GO" id="GO:0032979">
    <property type="term" value="P:protein insertion into mitochondrial inner membrane from matrix"/>
    <property type="evidence" value="ECO:0000318"/>
    <property type="project" value="GO_Central"/>
</dbReference>
<dbReference type="CDD" id="cd19510">
    <property type="entry name" value="RecA-like_BCS1"/>
    <property type="match status" value="1"/>
</dbReference>
<dbReference type="FunFam" id="3.40.50.300:FF:000768">
    <property type="entry name" value="Probable mitochondrial chaperone bcs1"/>
    <property type="match status" value="1"/>
</dbReference>
<dbReference type="Gene3D" id="3.40.50.300">
    <property type="entry name" value="P-loop containing nucleotide triphosphate hydrolases"/>
    <property type="match status" value="1"/>
</dbReference>
<dbReference type="InterPro" id="IPR003593">
    <property type="entry name" value="AAA+_ATPase"/>
</dbReference>
<dbReference type="InterPro" id="IPR003959">
    <property type="entry name" value="ATPase_AAA_core"/>
</dbReference>
<dbReference type="InterPro" id="IPR003960">
    <property type="entry name" value="ATPase_AAA_CS"/>
</dbReference>
<dbReference type="InterPro" id="IPR014851">
    <property type="entry name" value="BCS1_N"/>
</dbReference>
<dbReference type="InterPro" id="IPR050747">
    <property type="entry name" value="Mitochondrial_chaperone_BCS1"/>
</dbReference>
<dbReference type="InterPro" id="IPR027417">
    <property type="entry name" value="P-loop_NTPase"/>
</dbReference>
<dbReference type="PANTHER" id="PTHR23070">
    <property type="entry name" value="BCS1 AAA-TYPE ATPASE"/>
    <property type="match status" value="1"/>
</dbReference>
<dbReference type="Pfam" id="PF00004">
    <property type="entry name" value="AAA"/>
    <property type="match status" value="1"/>
</dbReference>
<dbReference type="Pfam" id="PF25426">
    <property type="entry name" value="AAA_lid_BCS1"/>
    <property type="match status" value="1"/>
</dbReference>
<dbReference type="Pfam" id="PF08740">
    <property type="entry name" value="BCS1_N"/>
    <property type="match status" value="1"/>
</dbReference>
<dbReference type="SMART" id="SM00382">
    <property type="entry name" value="AAA"/>
    <property type="match status" value="1"/>
</dbReference>
<dbReference type="SMART" id="SM01024">
    <property type="entry name" value="BCS1_N"/>
    <property type="match status" value="1"/>
</dbReference>
<dbReference type="SUPFAM" id="SSF52540">
    <property type="entry name" value="P-loop containing nucleoside triphosphate hydrolases"/>
    <property type="match status" value="1"/>
</dbReference>
<dbReference type="PROSITE" id="PS00674">
    <property type="entry name" value="AAA"/>
    <property type="match status" value="1"/>
</dbReference>
<sequence>MNHLKDQSKSIVLGISSGIGIFLISGGINIFKNVGQYILNRINSNIYYRIDVDSKDKSFEWLLYWLSENDSIKVSNHLNAETVYNLVGKNPKVILVPSVGKHRIVYKGKWIWIDRVRDQQFDMGAGAPFESISISTYKSNAQLINQLLQEAMTLSLNRDIGKTVIYINGGNGNWERFGNPRSIRSLSSVILADDLKSKLIEDIKSFITNESWYRNRGIPYRRGYLLYGEPGNGKSSLINAIAGELNLDICIVSLSSKDIDDKQINHLLNNAPPKSILLIEDIDAAFKSHRDNVDSNNNNSNNNNSLTYSGLLNALDGVASQEGRILFMTTNKIELLDSALIREGRIDLKIKVSNATKSQAAQLFTHFYNLPTDNQLAIRFSENLHDHQLSMSQIQGFLLKYINSPEKAIEEVQSITPFNLN</sequence>
<feature type="chain" id="PRO_0000327920" description="Probable mitochondrial chaperone BCS1-A">
    <location>
        <begin position="1"/>
        <end position="421"/>
    </location>
</feature>
<feature type="topological domain" description="Mitochondrial intermembrane" evidence="3">
    <location>
        <begin position="1"/>
        <end position="10"/>
    </location>
</feature>
<feature type="transmembrane region" description="Helical" evidence="3">
    <location>
        <begin position="11"/>
        <end position="31"/>
    </location>
</feature>
<feature type="topological domain" description="Mitochondrial matrix" evidence="3">
    <location>
        <begin position="32"/>
        <end position="421"/>
    </location>
</feature>
<feature type="binding site" evidence="3">
    <location>
        <begin position="228"/>
        <end position="235"/>
    </location>
    <ligand>
        <name>ATP</name>
        <dbReference type="ChEBI" id="CHEBI:30616"/>
    </ligand>
</feature>